<feature type="chain" id="PRO_0000279249" description="Polymerase acidic protein">
    <location>
        <begin position="1"/>
        <end position="716"/>
    </location>
</feature>
<feature type="short sequence motif" description="Nuclear localization signal 1 (NLS1)" evidence="1 2">
    <location>
        <begin position="124"/>
        <end position="139"/>
    </location>
</feature>
<feature type="short sequence motif" description="Nuclear localization signal 2 (NLS2)" evidence="1 2">
    <location>
        <begin position="184"/>
        <end position="247"/>
    </location>
</feature>
<feature type="binding site" evidence="2">
    <location>
        <position position="41"/>
    </location>
    <ligand>
        <name>Mn(2+)</name>
        <dbReference type="ChEBI" id="CHEBI:29035"/>
        <label>1</label>
    </ligand>
</feature>
<feature type="binding site" evidence="2">
    <location>
        <position position="80"/>
    </location>
    <ligand>
        <name>Mn(2+)</name>
        <dbReference type="ChEBI" id="CHEBI:29035"/>
        <label>2</label>
    </ligand>
</feature>
<feature type="binding site" evidence="2">
    <location>
        <position position="108"/>
    </location>
    <ligand>
        <name>Mn(2+)</name>
        <dbReference type="ChEBI" id="CHEBI:29035"/>
        <label>1</label>
    </ligand>
</feature>
<feature type="binding site" evidence="2">
    <location>
        <position position="108"/>
    </location>
    <ligand>
        <name>Mn(2+)</name>
        <dbReference type="ChEBI" id="CHEBI:29035"/>
        <label>2</label>
    </ligand>
</feature>
<feature type="binding site" evidence="2">
    <location>
        <position position="119"/>
    </location>
    <ligand>
        <name>Mn(2+)</name>
        <dbReference type="ChEBI" id="CHEBI:29035"/>
        <label>1</label>
    </ligand>
</feature>
<feature type="binding site" evidence="2">
    <location>
        <position position="120"/>
    </location>
    <ligand>
        <name>Mn(2+)</name>
        <dbReference type="ChEBI" id="CHEBI:29035"/>
        <label>1</label>
    </ligand>
</feature>
<feature type="sequence variant" description="In strain: Isolate MA20c.">
    <original>E</original>
    <variation>G</variation>
    <location>
        <position position="133"/>
    </location>
</feature>
<feature type="sequence variant" description="In strain: Isolate MA20c.">
    <original>Q</original>
    <variation>R</variation>
    <location>
        <position position="556"/>
    </location>
</feature>
<comment type="function">
    <text evidence="2">Plays an essential role in viral RNA transcription and replication by forming the heterotrimeric polymerase complex together with PB1 and PB2 subunits. The complex transcribes viral mRNAs by using a unique mechanism called cap-snatching. It consists in the hijacking and cleavage of host capped pre-mRNAs. These short capped RNAs are then used as primers for viral mRNAs. The PB2 subunit is responsible for the binding of the 5' cap of cellular pre-mRNAs which are subsequently cleaved after 10-13 nucleotides by the PA subunit that carries the endonuclease activity.</text>
</comment>
<comment type="cofactor">
    <cofactor evidence="2">
        <name>Mn(2+)</name>
        <dbReference type="ChEBI" id="CHEBI:29035"/>
    </cofactor>
    <text evidence="2">Binds 2 manganese ions per subunit.</text>
</comment>
<comment type="subunit">
    <text evidence="1 2">Influenza RNA polymerase is composed of three subunits: PB1, PB2 and PA. Interacts (via C-terminus) with PB1 (via N-terminus).</text>
</comment>
<comment type="subcellular location">
    <subcellularLocation>
        <location evidence="2">Host cytoplasm</location>
    </subcellularLocation>
    <subcellularLocation>
        <location evidence="2">Host nucleus</location>
    </subcellularLocation>
    <text evidence="1 2">PB1 and PA are transported in the host nucleus as a complex.</text>
</comment>
<comment type="alternative products">
    <event type="ribosomal frameshifting"/>
    <isoform>
        <id>Q91MA9-1</id>
        <name>PA</name>
        <sequence type="displayed"/>
    </isoform>
    <isoform>
        <id>P0DJR7-1</id>
        <name>PA-X</name>
        <sequence type="external"/>
    </isoform>
</comment>
<comment type="PTM">
    <text evidence="1 2">Phosphorylated on serines and threonines by host kinases, including human casein kinase II.</text>
</comment>
<comment type="similarity">
    <text evidence="2">Belongs to the influenza viruses PA family.</text>
</comment>
<reference key="1">
    <citation type="journal article" date="2001" name="Proc. Natl. Acad. Sci. U.S.A.">
        <title>Pattern of mutation in the genome of influenza A virus on adaptation to increased virulence in the mouse lung: identification of functional themes.</title>
        <authorList>
            <person name="Brown E.G."/>
            <person name="Liu H."/>
            <person name="Kit L.C."/>
            <person name="Baird S."/>
            <person name="Nesrallah M."/>
        </authorList>
    </citation>
    <scope>NUCLEOTIDE SEQUENCE [GENOMIC RNA]</scope>
    <source>
        <strain>A/Hong Kong/1/1968</strain>
        <strain>Isolate MA20c</strain>
    </source>
</reference>
<gene>
    <name evidence="2" type="primary">PA</name>
</gene>
<sequence>MEDFVRQCFNPMIVELAEKAMKEYGEDLKIETNKFAAICTHLEVCFMYSDFHFINEQGESIVVELDDPNALLKHRFEIIEGRDRTMAWTVVNSICNTTGAEKPKFLPDLYDYKENRFIEIGVTRREVHIYYLEKANKIKSENTHIHIFSFTGEEMATKADYTLDEESRARIKTRLFTIRQEMANRGLWDSFRQSERGEETIEERFEITGTMRRLADQSLPPNFSCLENFRAYVDGFEPNGYIEGKLSQMSKEVNAKIEPFLKTTPRPIRLPDGPPCFQRSKFLLMDALKLSIEDPSHEGEGIPLYDAIKCMRTFFGWKEPYIVKPHEKGINPNYLLSWKQVLAELQDIENEEKIPRTKNMKKTSQLKWALGENMAPEKVDFDNCRDVSDLKQYDSDEPELRSLSSWIQNEFNKACELTDSTWIELDEIGEDVAPIEYIASMRRNYFTAEVSHCRATEYIMKGVYINTALLNASCAAMDDFQLIPMISKCRTKEGRRKTNLYGFIIKGRSHLRNDTDVVNFVSMEFSLTDPRLEPHKWEKYCVLEIGDMLLRSAIGQMSRPMFLYVRTNGTSKIKMKWGMEMRRCLLQSLQQIESMIEAESSVKEKDMTKEFFENKSETWPIGESPKGVEDGSIGKVCRTLLAKSVFNSLYASPQLEGFSAESRKLLLVVQALKDNLEPGTFDLEGLYEAIEECLINDPWVLLNASWFNSFLTHALR</sequence>
<organism>
    <name type="scientific">Influenza A virus (strain A/Hong Kong/1/1968 H3N2)</name>
    <dbReference type="NCBI Taxonomy" id="506350"/>
    <lineage>
        <taxon>Viruses</taxon>
        <taxon>Riboviria</taxon>
        <taxon>Orthornavirae</taxon>
        <taxon>Negarnaviricota</taxon>
        <taxon>Polyploviricotina</taxon>
        <taxon>Insthoviricetes</taxon>
        <taxon>Articulavirales</taxon>
        <taxon>Orthomyxoviridae</taxon>
        <taxon>Alphainfluenzavirus</taxon>
        <taxon>Alphainfluenzavirus influenzae</taxon>
        <taxon>Influenza A virus</taxon>
    </lineage>
</organism>
<keyword id="KW-1157">Cap snatching</keyword>
<keyword id="KW-0255">Endonuclease</keyword>
<keyword id="KW-1262">Eukaryotic host gene expression shutoff by virus</keyword>
<keyword id="KW-1191">Eukaryotic host transcription shutoff by virus</keyword>
<keyword id="KW-1035">Host cytoplasm</keyword>
<keyword id="KW-1190">Host gene expression shutoff by virus</keyword>
<keyword id="KW-1048">Host nucleus</keyword>
<keyword id="KW-0945">Host-virus interaction</keyword>
<keyword id="KW-0378">Hydrolase</keyword>
<keyword id="KW-1104">Inhibition of host RNA polymerase II by virus</keyword>
<keyword id="KW-0464">Manganese</keyword>
<keyword id="KW-0479">Metal-binding</keyword>
<keyword id="KW-0540">Nuclease</keyword>
<keyword id="KW-0597">Phosphoprotein</keyword>
<keyword id="KW-0688">Ribosomal frameshifting</keyword>
<protein>
    <recommendedName>
        <fullName evidence="2">Polymerase acidic protein</fullName>
        <ecNumber evidence="2">3.1.-.-</ecNumber>
    </recommendedName>
    <alternativeName>
        <fullName evidence="2">RNA-directed RNA polymerase subunit P2</fullName>
    </alternativeName>
</protein>
<name>PA_I68A4</name>
<dbReference type="EC" id="3.1.-.-" evidence="2"/>
<dbReference type="EMBL" id="AF348174">
    <property type="protein sequence ID" value="AAK51716.1"/>
    <property type="molecule type" value="Genomic_RNA"/>
</dbReference>
<dbReference type="EMBL" id="AF348175">
    <property type="protein sequence ID" value="AAK51717.1"/>
    <property type="molecule type" value="Genomic_RNA"/>
</dbReference>
<dbReference type="SMR" id="Q91MA9"/>
<dbReference type="ChEMBL" id="CHEMBL2040544"/>
<dbReference type="MEROPS" id="S62.001"/>
<dbReference type="Proteomes" id="UP000142359">
    <property type="component" value="Genome"/>
</dbReference>
<dbReference type="GO" id="GO:0030430">
    <property type="term" value="C:host cell cytoplasm"/>
    <property type="evidence" value="ECO:0007669"/>
    <property type="project" value="UniProtKB-SubCell"/>
</dbReference>
<dbReference type="GO" id="GO:0042025">
    <property type="term" value="C:host cell nucleus"/>
    <property type="evidence" value="ECO:0007669"/>
    <property type="project" value="UniProtKB-SubCell"/>
</dbReference>
<dbReference type="GO" id="GO:0004519">
    <property type="term" value="F:endonuclease activity"/>
    <property type="evidence" value="ECO:0007669"/>
    <property type="project" value="UniProtKB-KW"/>
</dbReference>
<dbReference type="GO" id="GO:0046872">
    <property type="term" value="F:metal ion binding"/>
    <property type="evidence" value="ECO:0007669"/>
    <property type="project" value="UniProtKB-KW"/>
</dbReference>
<dbReference type="GO" id="GO:0003723">
    <property type="term" value="F:RNA binding"/>
    <property type="evidence" value="ECO:0007669"/>
    <property type="project" value="UniProtKB-UniRule"/>
</dbReference>
<dbReference type="GO" id="GO:0075526">
    <property type="term" value="P:cap snatching"/>
    <property type="evidence" value="ECO:0007669"/>
    <property type="project" value="UniProtKB-UniRule"/>
</dbReference>
<dbReference type="GO" id="GO:0006351">
    <property type="term" value="P:DNA-templated transcription"/>
    <property type="evidence" value="ECO:0007669"/>
    <property type="project" value="UniProtKB-UniRule"/>
</dbReference>
<dbReference type="GO" id="GO:0039657">
    <property type="term" value="P:symbiont-mediated suppression of host gene expression"/>
    <property type="evidence" value="ECO:0007669"/>
    <property type="project" value="UniProtKB-KW"/>
</dbReference>
<dbReference type="GO" id="GO:0039523">
    <property type="term" value="P:symbiont-mediated suppression of host mRNA transcription via inhibition of RNA polymerase II activity"/>
    <property type="evidence" value="ECO:0007669"/>
    <property type="project" value="UniProtKB-UniRule"/>
</dbReference>
<dbReference type="GO" id="GO:0039694">
    <property type="term" value="P:viral RNA genome replication"/>
    <property type="evidence" value="ECO:0007669"/>
    <property type="project" value="InterPro"/>
</dbReference>
<dbReference type="GO" id="GO:0075523">
    <property type="term" value="P:viral translational frameshifting"/>
    <property type="evidence" value="ECO:0007669"/>
    <property type="project" value="UniProtKB-KW"/>
</dbReference>
<dbReference type="FunFam" id="3.40.91.90:FF:000001">
    <property type="entry name" value="Polymerase acidic protein"/>
    <property type="match status" value="1"/>
</dbReference>
<dbReference type="Gene3D" id="3.40.91.90">
    <property type="entry name" value="Influenza RNA-dependent RNA polymerase subunit PA, endonuclease domain"/>
    <property type="match status" value="1"/>
</dbReference>
<dbReference type="HAMAP" id="MF_04063">
    <property type="entry name" value="INFV_PA"/>
    <property type="match status" value="1"/>
</dbReference>
<dbReference type="InterPro" id="IPR037534">
    <property type="entry name" value="INFV_PA"/>
</dbReference>
<dbReference type="InterPro" id="IPR001009">
    <property type="entry name" value="PA/PA-X"/>
</dbReference>
<dbReference type="InterPro" id="IPR038372">
    <property type="entry name" value="PA/PA-X_sf"/>
</dbReference>
<dbReference type="Pfam" id="PF00603">
    <property type="entry name" value="Flu_PA"/>
    <property type="match status" value="1"/>
</dbReference>
<evidence type="ECO:0000250" key="1">
    <source>
        <dbReference type="UniProtKB" id="P03433"/>
    </source>
</evidence>
<evidence type="ECO:0000255" key="2">
    <source>
        <dbReference type="HAMAP-Rule" id="MF_04063"/>
    </source>
</evidence>
<organismHost>
    <name type="scientific">Aves</name>
    <dbReference type="NCBI Taxonomy" id="8782"/>
</organismHost>
<organismHost>
    <name type="scientific">Cetacea</name>
    <name type="common">whales</name>
    <dbReference type="NCBI Taxonomy" id="9721"/>
</organismHost>
<organismHost>
    <name type="scientific">Homo sapiens</name>
    <name type="common">Human</name>
    <dbReference type="NCBI Taxonomy" id="9606"/>
</organismHost>
<organismHost>
    <name type="scientific">Phocidae</name>
    <name type="common">true seals</name>
    <dbReference type="NCBI Taxonomy" id="9709"/>
</organismHost>
<organismHost>
    <name type="scientific">Sus scrofa</name>
    <name type="common">Pig</name>
    <dbReference type="NCBI Taxonomy" id="9823"/>
</organismHost>
<proteinExistence type="inferred from homology"/>
<accession>Q91MA9</accession>
<accession>Q91MA8</accession>